<accession>Q56134</accession>
<accession>Q7AME0</accession>
<accession>Q7C7N1</accession>
<reference key="1">
    <citation type="journal article" date="1995" name="Mol. Microbiol.">
        <title>Functional conservation of the Salmonella and Shigella effectors of entry into epithelial cells.</title>
        <authorList>
            <person name="Hermant D."/>
            <person name="Menard R."/>
            <person name="Arricau N."/>
            <person name="Parsot C."/>
            <person name="Popoff M.Y."/>
        </authorList>
    </citation>
    <scope>NUCLEOTIDE SEQUENCE [GENOMIC DNA]</scope>
    <source>
        <strain>ATCC 700931 / Ty2</strain>
    </source>
</reference>
<reference key="2">
    <citation type="journal article" date="2001" name="Nature">
        <title>Complete genome sequence of a multiple drug resistant Salmonella enterica serovar Typhi CT18.</title>
        <authorList>
            <person name="Parkhill J."/>
            <person name="Dougan G."/>
            <person name="James K.D."/>
            <person name="Thomson N.R."/>
            <person name="Pickard D."/>
            <person name="Wain J."/>
            <person name="Churcher C.M."/>
            <person name="Mungall K.L."/>
            <person name="Bentley S.D."/>
            <person name="Holden M.T.G."/>
            <person name="Sebaihia M."/>
            <person name="Baker S."/>
            <person name="Basham D."/>
            <person name="Brooks K."/>
            <person name="Chillingworth T."/>
            <person name="Connerton P."/>
            <person name="Cronin A."/>
            <person name="Davis P."/>
            <person name="Davies R.M."/>
            <person name="Dowd L."/>
            <person name="White N."/>
            <person name="Farrar J."/>
            <person name="Feltwell T."/>
            <person name="Hamlin N."/>
            <person name="Haque A."/>
            <person name="Hien T.T."/>
            <person name="Holroyd S."/>
            <person name="Jagels K."/>
            <person name="Krogh A."/>
            <person name="Larsen T.S."/>
            <person name="Leather S."/>
            <person name="Moule S."/>
            <person name="O'Gaora P."/>
            <person name="Parry C."/>
            <person name="Quail M.A."/>
            <person name="Rutherford K.M."/>
            <person name="Simmonds M."/>
            <person name="Skelton J."/>
            <person name="Stevens K."/>
            <person name="Whitehead S."/>
            <person name="Barrell B.G."/>
        </authorList>
    </citation>
    <scope>NUCLEOTIDE SEQUENCE [LARGE SCALE GENOMIC DNA]</scope>
    <source>
        <strain>CT18</strain>
    </source>
</reference>
<reference key="3">
    <citation type="journal article" date="2003" name="J. Bacteriol.">
        <title>Comparative genomics of Salmonella enterica serovar Typhi strains Ty2 and CT18.</title>
        <authorList>
            <person name="Deng W."/>
            <person name="Liou S.-R."/>
            <person name="Plunkett G. III"/>
            <person name="Mayhew G.F."/>
            <person name="Rose D.J."/>
            <person name="Burland V."/>
            <person name="Kodoyianni V."/>
            <person name="Schwartz D.C."/>
            <person name="Blattner F.R."/>
        </authorList>
    </citation>
    <scope>NUCLEOTIDE SEQUENCE [LARGE SCALE GENOMIC DNA]</scope>
    <source>
        <strain>ATCC 700931 / Ty2</strain>
    </source>
</reference>
<reference key="4">
    <citation type="journal article" date="1999" name="Proc. Natl. Acad. Sci. U.S.A.">
        <title>The Salmonella invasin SipB induces macrophage apoptosis by binding to caspase-1.</title>
        <authorList>
            <person name="Hersh D."/>
            <person name="Monack D.M."/>
            <person name="Smith M.R."/>
            <person name="Ghori N."/>
            <person name="Falkow S."/>
            <person name="Zychlinsky A."/>
        </authorList>
    </citation>
    <scope>FUNCTION IN CASPASE-1-DEPENDENT APOPTOSIS</scope>
    <scope>SUBCELLULAR LOCATION</scope>
    <source>
        <strain>ATCC 700931 / Ty2</strain>
    </source>
</reference>
<reference key="5">
    <citation type="journal article" date="2001" name="Microbiol. Immunol.">
        <title>Vi-Suppressed wild strain Salmonella typhi cultured in high osmolarity is hyperinvasive toward epithelial cells and destructive of Peyer's patches.</title>
        <authorList>
            <person name="Zhao L."/>
            <person name="Ezak T."/>
            <person name="Li Z.-Y."/>
            <person name="Kawamura Y."/>
            <person name="Hirose K."/>
            <person name="Watanabe H."/>
        </authorList>
    </citation>
    <scope>SUBCELLULAR LOCATION</scope>
    <source>
        <strain>GIFU 10007</strain>
    </source>
</reference>
<proteinExistence type="evidence at protein level"/>
<comment type="function">
    <text evidence="1">Component of the type III secretion system 1 (SPI-1 T3SS), also called injectisome, which is used to inject bacterial effector proteins into eukaryotic host cells (By similarity). SipB/SctE1 and SipC/SctB are inserted into the host membrane where they form a pore and allow the translocation of effector proteins into the cytosol of target cells (By similarity).</text>
</comment>
<comment type="function">
    <text evidence="1 3">Induces macrophage apoptosis either by binding and activating the proapoptotic enzyme caspase-1 (caspase-1 dependent), resulting in the release of interleukin-1 beta active form, or by disrupting mitochondria and inducing autophagy (caspase-1 independent). The former is dependent of its membrane-fusion activity.</text>
</comment>
<comment type="subunit">
    <text evidence="1">The core secretion machinery of the T3SS is composed of approximately 20 different proteins, including cytoplasmic components, a base, an export apparatus and a needle (By similarity). This subunit is involved in the formation of a pore, called the translocon, in host membrane (By similarity).</text>
</comment>
<comment type="interaction">
    <interactant intactId="EBI-489689">
        <id>Q56134</id>
    </interactant>
    <interactant intactId="EBI-489700">
        <id>P29452</id>
        <label>Casp1</label>
    </interactant>
    <organismsDiffer>true</organismsDiffer>
    <experiments>2</experiments>
</comment>
<comment type="subcellular location">
    <subcellularLocation>
        <location evidence="4">Secreted</location>
    </subcellularLocation>
    <subcellularLocation>
        <location evidence="1">Host membrane</location>
        <topology evidence="2">Multi-pass membrane protein</topology>
    </subcellularLocation>
    <subcellularLocation>
        <location evidence="3">Host cell</location>
    </subcellularLocation>
    <text evidence="1 3">Secreted via the type III secretion system 1 (SPI-1 T3SS) (By similarity). Also localizes to the cell cytoplasm in Salmonella-infected macrophages (PubMed:10051653).</text>
</comment>
<comment type="similarity">
    <text evidence="5">Belongs to the SctE/SipB/YopB family.</text>
</comment>
<protein>
    <recommendedName>
        <fullName evidence="5">SPI-1 type 3 secretion system translocon protein SctE</fullName>
        <shortName evidence="5">SPI-1 T3SS translocon protein SctE</shortName>
    </recommendedName>
    <alternativeName>
        <fullName>Cell invasion protein SipB</fullName>
    </alternativeName>
    <alternativeName>
        <fullName>Effector protein SipB</fullName>
    </alternativeName>
</protein>
<name>SCTE1_SALTI</name>
<sequence length="593" mass="62421">MVNDASSISRSGYTQNPRLAEAAFEGVRKNTDFLKAADKAFKDVVATKAGDLKAGTKSGESAINTVGLKPPTDAAREKLSSEGQLTLLLGKLMTLLGDVSLSQLESRLAVWQAMIESQKEMGIQVSKEFQTALGEAQEATDLYEASIKKTDTAKSVYDAAAKKLTQAQNKLQSLDPADPGYAQAEAAVEQAGKEATEAKEALDKATDATVKAGTDAKAKAEKADNILTKFQGTANAASQNQVSQGEQDNLSNVARLTMLMAMFIEIVGKNTEESLQNDLALFNALQEGRQAEMEKKSAEFQEETRKAEETNRIMGCIGKVLGALLTIVSVVAAVFTGGASLALAAVGLAVMVADEIVKAATGVSFIQQALNPIMEHVLKPLMELIGKAITKALEGLGVDKKTAEMAGSIVGAIVAAIAMVAVIVVVAVVGKGAAAKLGNALSKMMGETIKKLVPNVLKQLAQNGSKLFTQGMQRITSGLGNVGSKMGLQTNALSKELVGNTLNKVALGMEVTNTAAQSAGGVAEGVFIKNASEALADFMLARFAMDQIQQWLKQSVEIFGENQKVTAELQKAMSSAVQQNADASRFILRQSRA</sequence>
<dbReference type="EMBL" id="X82670">
    <property type="protein sequence ID" value="CAA57988.1"/>
    <property type="molecule type" value="Genomic_DNA"/>
</dbReference>
<dbReference type="EMBL" id="AL513382">
    <property type="protein sequence ID" value="CAD05992.1"/>
    <property type="molecule type" value="Genomic_DNA"/>
</dbReference>
<dbReference type="EMBL" id="AE014613">
    <property type="protein sequence ID" value="AAO70348.1"/>
    <property type="molecule type" value="Genomic_DNA"/>
</dbReference>
<dbReference type="PIR" id="S70216">
    <property type="entry name" value="S70216"/>
</dbReference>
<dbReference type="RefSeq" id="NP_457279.1">
    <property type="nucleotide sequence ID" value="NC_003198.1"/>
</dbReference>
<dbReference type="RefSeq" id="WP_000245782.1">
    <property type="nucleotide sequence ID" value="NZ_WSUR01000005.1"/>
</dbReference>
<dbReference type="SMR" id="Q56134"/>
<dbReference type="IntAct" id="Q56134">
    <property type="interactions" value="1"/>
</dbReference>
<dbReference type="STRING" id="220341.gene:17586902"/>
<dbReference type="KEGG" id="stt:t2787"/>
<dbReference type="KEGG" id="sty:STY3008"/>
<dbReference type="PATRIC" id="fig|220341.7.peg.3062"/>
<dbReference type="eggNOG" id="ENOG502ZBCB">
    <property type="taxonomic scope" value="Bacteria"/>
</dbReference>
<dbReference type="HOGENOM" id="CLU_027418_0_0_6"/>
<dbReference type="OMA" id="DIMHQAN"/>
<dbReference type="OrthoDB" id="6623144at2"/>
<dbReference type="PHI-base" id="PHI:638"/>
<dbReference type="Proteomes" id="UP000000541">
    <property type="component" value="Chromosome"/>
</dbReference>
<dbReference type="Proteomes" id="UP000002670">
    <property type="component" value="Chromosome"/>
</dbReference>
<dbReference type="GO" id="GO:0005576">
    <property type="term" value="C:extracellular region"/>
    <property type="evidence" value="ECO:0007669"/>
    <property type="project" value="UniProtKB-SubCell"/>
</dbReference>
<dbReference type="GO" id="GO:0043657">
    <property type="term" value="C:host cell"/>
    <property type="evidence" value="ECO:0007669"/>
    <property type="project" value="UniProtKB-SubCell"/>
</dbReference>
<dbReference type="GO" id="GO:0033644">
    <property type="term" value="C:host cell membrane"/>
    <property type="evidence" value="ECO:0007669"/>
    <property type="project" value="UniProtKB-SubCell"/>
</dbReference>
<dbReference type="GO" id="GO:0016020">
    <property type="term" value="C:membrane"/>
    <property type="evidence" value="ECO:0007669"/>
    <property type="project" value="UniProtKB-KW"/>
</dbReference>
<dbReference type="Gene3D" id="1.20.120.330">
    <property type="entry name" value="Nucleotidyltransferases domain 2"/>
    <property type="match status" value="2"/>
</dbReference>
<dbReference type="InterPro" id="IPR006972">
    <property type="entry name" value="BipB-like_C"/>
</dbReference>
<dbReference type="InterPro" id="IPR032391">
    <property type="entry name" value="IpaB/BipB/SctE_N"/>
</dbReference>
<dbReference type="InterPro" id="IPR003895">
    <property type="entry name" value="T3SS_SctE/BipB"/>
</dbReference>
<dbReference type="NCBIfam" id="NF011901">
    <property type="entry name" value="PRK15374.1"/>
    <property type="match status" value="1"/>
</dbReference>
<dbReference type="Pfam" id="PF04888">
    <property type="entry name" value="SseC"/>
    <property type="match status" value="1"/>
</dbReference>
<dbReference type="Pfam" id="PF16535">
    <property type="entry name" value="T3SSipB"/>
    <property type="match status" value="1"/>
</dbReference>
<dbReference type="PRINTS" id="PR01375">
    <property type="entry name" value="BACINVASINB"/>
</dbReference>
<organism>
    <name type="scientific">Salmonella typhi</name>
    <dbReference type="NCBI Taxonomy" id="90370"/>
    <lineage>
        <taxon>Bacteria</taxon>
        <taxon>Pseudomonadati</taxon>
        <taxon>Pseudomonadota</taxon>
        <taxon>Gammaproteobacteria</taxon>
        <taxon>Enterobacterales</taxon>
        <taxon>Enterobacteriaceae</taxon>
        <taxon>Salmonella</taxon>
    </lineage>
</organism>
<feature type="chain" id="PRO_0000219855" description="SPI-1 type 3 secretion system translocon protein SctE">
    <location>
        <begin position="1"/>
        <end position="593"/>
    </location>
</feature>
<feature type="transmembrane region" description="Helical" evidence="2">
    <location>
        <begin position="330"/>
        <end position="350"/>
    </location>
</feature>
<feature type="transmembrane region" description="Helical" evidence="2">
    <location>
        <begin position="409"/>
        <end position="429"/>
    </location>
</feature>
<feature type="coiled-coil region" evidence="2">
    <location>
        <begin position="151"/>
        <end position="208"/>
    </location>
</feature>
<feature type="coiled-coil region" evidence="2">
    <location>
        <begin position="287"/>
        <end position="314"/>
    </location>
</feature>
<evidence type="ECO:0000250" key="1">
    <source>
        <dbReference type="UniProtKB" id="Q56019"/>
    </source>
</evidence>
<evidence type="ECO:0000255" key="2"/>
<evidence type="ECO:0000269" key="3">
    <source>
    </source>
</evidence>
<evidence type="ECO:0000269" key="4">
    <source>
    </source>
</evidence>
<evidence type="ECO:0000305" key="5"/>
<keyword id="KW-0175">Coiled coil</keyword>
<keyword id="KW-1043">Host membrane</keyword>
<keyword id="KW-0472">Membrane</keyword>
<keyword id="KW-0964">Secreted</keyword>
<keyword id="KW-0812">Transmembrane</keyword>
<keyword id="KW-1133">Transmembrane helix</keyword>
<keyword id="KW-0843">Virulence</keyword>
<gene>
    <name evidence="1" type="primary">sctE1</name>
    <name type="synonym">sipB</name>
    <name type="ordered locus">STY3008</name>
    <name type="ordered locus">t2787</name>
</gene>